<organism>
    <name type="scientific">Pinus pinea</name>
    <name type="common">Italian stone pine</name>
    <dbReference type="NCBI Taxonomy" id="3346"/>
    <lineage>
        <taxon>Eukaryota</taxon>
        <taxon>Viridiplantae</taxon>
        <taxon>Streptophyta</taxon>
        <taxon>Embryophyta</taxon>
        <taxon>Tracheophyta</taxon>
        <taxon>Spermatophyta</taxon>
        <taxon>Pinopsida</taxon>
        <taxon>Pinidae</taxon>
        <taxon>Conifers I</taxon>
        <taxon>Pinales</taxon>
        <taxon>Pinaceae</taxon>
        <taxon>Pinus</taxon>
        <taxon>Pinus subgen. Pinus</taxon>
    </lineage>
</organism>
<geneLocation type="chloroplast"/>
<sequence length="515" mass="60872">MDEFHRCGKEDSFWQQCFLYPLFFQEDLYAISHDHYLDVSSSSRPMEHLSSNDQLSFLTVKRLIGQIRQQNHSIVLFVNCDPNPLADRKKSFYSESVLEALTLVLEVPFSIWSKSSVEGMNECKSFRSIHSIFPFLEDKFPHSNSILDARIPYSIHPEILVRTFRRWIRDAPSLHPLRSVLYDYRNSPENLQRSIIVVPRVNTRFFLFLLNYYVCECESILFSRLKRSSHSRSLTHGSFPQRTHFHRKIKHIIIFSRRNSLKTIWSLKDPKIHYVRYGERPIIAIKGAHLLVKKCRYYLLIFRQFYFHLWSEPYRVCSHQLSKNCSSSPGYFLRVRMNPIFVRTKMLDELFIADLITNEMDPIVPIVPIIGLLATEKFCDISGRPISKLSWTSLTDDDILDRFDQIWRNLFHYYSGSFDRDGLYRIKYILSLSCAKTLACKHKSTIRVVRKELGPELFKKSFSKEREFDSLPFSSKAAARSQRERIWHSDIPQINPLANSWQKIQDLKIENLFDQ</sequence>
<gene>
    <name evidence="1" type="primary">matK</name>
</gene>
<protein>
    <recommendedName>
        <fullName evidence="1">Maturase K</fullName>
    </recommendedName>
    <alternativeName>
        <fullName evidence="1">Intron maturase</fullName>
    </alternativeName>
</protein>
<accession>Q8HQQ3</accession>
<feature type="chain" id="PRO_0000143623" description="Maturase K">
    <location>
        <begin position="1"/>
        <end position="515"/>
    </location>
</feature>
<comment type="function">
    <text evidence="1">Usually encoded in the trnK tRNA gene intron. Probably assists in splicing its own and other chloroplast group II introns.</text>
</comment>
<comment type="subcellular location">
    <subcellularLocation>
        <location>Plastid</location>
        <location>Chloroplast</location>
    </subcellularLocation>
</comment>
<comment type="similarity">
    <text evidence="1">Belongs to the intron maturase 2 family. MatK subfamily.</text>
</comment>
<evidence type="ECO:0000255" key="1">
    <source>
        <dbReference type="HAMAP-Rule" id="MF_01390"/>
    </source>
</evidence>
<keyword id="KW-0150">Chloroplast</keyword>
<keyword id="KW-0507">mRNA processing</keyword>
<keyword id="KW-0934">Plastid</keyword>
<keyword id="KW-0694">RNA-binding</keyword>
<keyword id="KW-0819">tRNA processing</keyword>
<reference key="1">
    <citation type="submission" date="2002-05" db="EMBL/GenBank/DDBJ databases">
        <title>Phylogeny of diploxylon Pinus.</title>
        <authorList>
            <person name="Geada-Lopez G."/>
            <person name="Kamiya K."/>
            <person name="Harada K."/>
        </authorList>
    </citation>
    <scope>NUCLEOTIDE SEQUENCE [GENOMIC DNA]</scope>
    <source>
        <tissue>Leaf</tissue>
    </source>
</reference>
<proteinExistence type="inferred from homology"/>
<name>MATK_PINPI</name>
<dbReference type="EMBL" id="AB084496">
    <property type="protein sequence ID" value="BAC22913.1"/>
    <property type="molecule type" value="Genomic_DNA"/>
</dbReference>
<dbReference type="GO" id="GO:0009507">
    <property type="term" value="C:chloroplast"/>
    <property type="evidence" value="ECO:0007669"/>
    <property type="project" value="UniProtKB-SubCell"/>
</dbReference>
<dbReference type="GO" id="GO:0003723">
    <property type="term" value="F:RNA binding"/>
    <property type="evidence" value="ECO:0007669"/>
    <property type="project" value="UniProtKB-KW"/>
</dbReference>
<dbReference type="GO" id="GO:0006397">
    <property type="term" value="P:mRNA processing"/>
    <property type="evidence" value="ECO:0007669"/>
    <property type="project" value="UniProtKB-KW"/>
</dbReference>
<dbReference type="GO" id="GO:0008380">
    <property type="term" value="P:RNA splicing"/>
    <property type="evidence" value="ECO:0007669"/>
    <property type="project" value="UniProtKB-UniRule"/>
</dbReference>
<dbReference type="GO" id="GO:0008033">
    <property type="term" value="P:tRNA processing"/>
    <property type="evidence" value="ECO:0007669"/>
    <property type="project" value="UniProtKB-KW"/>
</dbReference>
<dbReference type="HAMAP" id="MF_01390">
    <property type="entry name" value="MatK"/>
    <property type="match status" value="1"/>
</dbReference>
<dbReference type="InterPro" id="IPR024937">
    <property type="entry name" value="Domain_X"/>
</dbReference>
<dbReference type="InterPro" id="IPR002866">
    <property type="entry name" value="Maturase_MatK"/>
</dbReference>
<dbReference type="InterPro" id="IPR024942">
    <property type="entry name" value="Maturase_MatK_N"/>
</dbReference>
<dbReference type="PANTHER" id="PTHR34811">
    <property type="entry name" value="MATURASE K"/>
    <property type="match status" value="1"/>
</dbReference>
<dbReference type="PANTHER" id="PTHR34811:SF1">
    <property type="entry name" value="MATURASE K"/>
    <property type="match status" value="1"/>
</dbReference>
<dbReference type="Pfam" id="PF01348">
    <property type="entry name" value="Intron_maturas2"/>
    <property type="match status" value="1"/>
</dbReference>
<dbReference type="Pfam" id="PF01824">
    <property type="entry name" value="MatK_N"/>
    <property type="match status" value="1"/>
</dbReference>